<evidence type="ECO:0000255" key="1">
    <source>
        <dbReference type="HAMAP-Rule" id="MF_01321"/>
    </source>
</evidence>
<proteinExistence type="inferred from homology"/>
<keyword id="KW-0240">DNA-directed RNA polymerase</keyword>
<keyword id="KW-0548">Nucleotidyltransferase</keyword>
<keyword id="KW-0804">Transcription</keyword>
<keyword id="KW-0808">Transferase</keyword>
<reference key="1">
    <citation type="journal article" date="2006" name="J. Bacteriol.">
        <title>Complete genome sequence of Yersinia pestis strains Antiqua and Nepal516: evidence of gene reduction in an emerging pathogen.</title>
        <authorList>
            <person name="Chain P.S.G."/>
            <person name="Hu P."/>
            <person name="Malfatti S.A."/>
            <person name="Radnedge L."/>
            <person name="Larimer F."/>
            <person name="Vergez L.M."/>
            <person name="Worsham P."/>
            <person name="Chu M.C."/>
            <person name="Andersen G.L."/>
        </authorList>
    </citation>
    <scope>NUCLEOTIDE SEQUENCE [LARGE SCALE GENOMIC DNA]</scope>
    <source>
        <strain>Antiqua</strain>
    </source>
</reference>
<accession>Q1C1U1</accession>
<comment type="function">
    <text evidence="1">DNA-dependent RNA polymerase catalyzes the transcription of DNA into RNA using the four ribonucleoside triphosphates as substrates.</text>
</comment>
<comment type="catalytic activity">
    <reaction evidence="1">
        <text>RNA(n) + a ribonucleoside 5'-triphosphate = RNA(n+1) + diphosphate</text>
        <dbReference type="Rhea" id="RHEA:21248"/>
        <dbReference type="Rhea" id="RHEA-COMP:14527"/>
        <dbReference type="Rhea" id="RHEA-COMP:17342"/>
        <dbReference type="ChEBI" id="CHEBI:33019"/>
        <dbReference type="ChEBI" id="CHEBI:61557"/>
        <dbReference type="ChEBI" id="CHEBI:140395"/>
        <dbReference type="EC" id="2.7.7.6"/>
    </reaction>
</comment>
<comment type="subunit">
    <text evidence="1">The RNAP catalytic core consists of 2 alpha, 1 beta, 1 beta' and 1 omega subunit. When a sigma factor is associated with the core the holoenzyme is formed, which can initiate transcription.</text>
</comment>
<comment type="similarity">
    <text evidence="1">Belongs to the RNA polymerase beta chain family.</text>
</comment>
<sequence length="1342" mass="150389">MVYSYTEKKRIRKDFGKRPQVLDIPYLLSIQLDSFQKFIEQDPEGQHGLEAAFRSVFPIQSYSGNSELQYVSYRLGEPVFDVKECQIRGVTYSAPLRVKLRLVIYEREAPEGTVKDIKEQEVYMGEIPLMTENGTFVINGTERVIVSQLHRSPGVFFDSDKGKTHSSGKVLYNARIIPYRGSWLDFEFDPKDNLFVRIDRRRKLPATIILRALNFTTAQILDLFFEKVVFEIRDNKLQMELVPERLRGETASFDIEANGKVYVEKARRITARHIRQLEKDGIDRIEVPVEYIAGKVVAKDYVDASTGELICAANMELSLDLLAKLSQAGHKQIETLFTNDLDHGAYISETLRVDPTSDRLSALVEIYRMMRPGEPPTREAAENLFENLFFSEDRYDLSAVGRMKFNRSLLRDEIEGSGILSKEDITEVMKKLIDIRNGRGEVDDIDHLGNRRIRSVGEMAENQFRVGLVRVERAVKERLSLGDLDTLMPQDMINAKPISAAVKEFFGSSQLSQFMDQNNPLSEITHKRRISALGPGGLTRERAGFEVRDVHPTHYGRVCPIETPEGPNIGLINSLSVYAQTNEYGFLETPYRRVRDGVVTDEINYLSAIEEGNFVIAQANSNLDDEGRFLEDLVTCRSKGESSLFSREQVDYMDVSTQQIVSVGASLIPFLEHDDANRALMGANMQRQAVPTLRADKPLVGTGMERAVAVDSGVTSVAKRGGTVQYVDASRIVIKVNEDEMHPGEAGIDIYNLTKYTRSNQNTCINQMPCVNLGEPIERGDVLADGPSTDLGELALGQNMRVAFMPWNGYNFEDSILVSERVVQEDRFTTIHIQELACVSRDTKLGPEEITADIPNVGEAALSKLDESGIVYIGAEVTGGDILVGKVTPKGETQLTPEEKLLRAIFGEKASDVKDSSLRVPNGVSGTVIDVQVFTRDGVEKDKRALEIEEMQLKQAKKDLTEELQILEAGLFARIHAVLVSGGIEAEKLSKLPRERWLELGLTDEDKQNQLEQLAEQYDEMKSEFEKKMDAKRRKITQGDDLAPGVLKIVKVYLAVKRQIQPGDKMAGRHGNKGVISKINPIEDMPYDENGTPVDIVLNPLGVPSRMNIGQILETHLGMAAKGIGEKINAMLKKQEEVAKLREFIQKAYDLGDNVCQKVDLSTFTDDEVLRLAENLKKGMPIATPVFDGATEKEIKELLQLGGLPTSGQITLFDGRTGEQFERQVTVGYMYMLKLNHLVDDKMHARSTGSYSLVTQQPLGGKAQFGGQRFGEMEVWALEAYGAAYTLQEMLTVKSDDVNGRTKMYKNIVDGDHRMEPGMPESFNVLLKEIRSLGINIELEEE</sequence>
<feature type="chain" id="PRO_0000300426" description="DNA-directed RNA polymerase subunit beta">
    <location>
        <begin position="1"/>
        <end position="1342"/>
    </location>
</feature>
<dbReference type="EC" id="2.7.7.6" evidence="1"/>
<dbReference type="EMBL" id="CP000308">
    <property type="protein sequence ID" value="ABG15581.1"/>
    <property type="molecule type" value="Genomic_DNA"/>
</dbReference>
<dbReference type="RefSeq" id="WP_002210676.1">
    <property type="nucleotide sequence ID" value="NZ_CP009906.1"/>
</dbReference>
<dbReference type="SMR" id="Q1C1U1"/>
<dbReference type="GeneID" id="57974971"/>
<dbReference type="KEGG" id="ypa:YPA_3619"/>
<dbReference type="Proteomes" id="UP000001971">
    <property type="component" value="Chromosome"/>
</dbReference>
<dbReference type="GO" id="GO:0000428">
    <property type="term" value="C:DNA-directed RNA polymerase complex"/>
    <property type="evidence" value="ECO:0007669"/>
    <property type="project" value="UniProtKB-KW"/>
</dbReference>
<dbReference type="GO" id="GO:0003677">
    <property type="term" value="F:DNA binding"/>
    <property type="evidence" value="ECO:0007669"/>
    <property type="project" value="UniProtKB-UniRule"/>
</dbReference>
<dbReference type="GO" id="GO:0003899">
    <property type="term" value="F:DNA-directed RNA polymerase activity"/>
    <property type="evidence" value="ECO:0007669"/>
    <property type="project" value="UniProtKB-UniRule"/>
</dbReference>
<dbReference type="GO" id="GO:0032549">
    <property type="term" value="F:ribonucleoside binding"/>
    <property type="evidence" value="ECO:0007669"/>
    <property type="project" value="InterPro"/>
</dbReference>
<dbReference type="GO" id="GO:0006351">
    <property type="term" value="P:DNA-templated transcription"/>
    <property type="evidence" value="ECO:0007669"/>
    <property type="project" value="UniProtKB-UniRule"/>
</dbReference>
<dbReference type="CDD" id="cd00653">
    <property type="entry name" value="RNA_pol_B_RPB2"/>
    <property type="match status" value="1"/>
</dbReference>
<dbReference type="FunFam" id="2.30.150.10:FF:000001">
    <property type="entry name" value="DNA-directed RNA polymerase subunit beta"/>
    <property type="match status" value="1"/>
</dbReference>
<dbReference type="FunFam" id="2.40.270.10:FF:000003">
    <property type="entry name" value="DNA-directed RNA polymerase subunit beta"/>
    <property type="match status" value="1"/>
</dbReference>
<dbReference type="FunFam" id="2.40.270.10:FF:000004">
    <property type="entry name" value="DNA-directed RNA polymerase subunit beta"/>
    <property type="match status" value="1"/>
</dbReference>
<dbReference type="FunFam" id="2.40.50.100:FF:000006">
    <property type="entry name" value="DNA-directed RNA polymerase subunit beta"/>
    <property type="match status" value="1"/>
</dbReference>
<dbReference type="FunFam" id="2.40.50.150:FF:000001">
    <property type="entry name" value="DNA-directed RNA polymerase subunit beta"/>
    <property type="match status" value="1"/>
</dbReference>
<dbReference type="FunFam" id="3.90.1100.10:FF:000002">
    <property type="entry name" value="DNA-directed RNA polymerase subunit beta"/>
    <property type="match status" value="1"/>
</dbReference>
<dbReference type="FunFam" id="3.90.1110.10:FF:000001">
    <property type="entry name" value="DNA-directed RNA polymerase subunit beta"/>
    <property type="match status" value="1"/>
</dbReference>
<dbReference type="FunFam" id="3.90.1110.10:FF:000004">
    <property type="entry name" value="DNA-directed RNA polymerase subunit beta"/>
    <property type="match status" value="1"/>
</dbReference>
<dbReference type="FunFam" id="3.90.1800.10:FF:000001">
    <property type="entry name" value="DNA-directed RNA polymerase subunit beta"/>
    <property type="match status" value="1"/>
</dbReference>
<dbReference type="Gene3D" id="2.40.50.100">
    <property type="match status" value="1"/>
</dbReference>
<dbReference type="Gene3D" id="2.40.50.150">
    <property type="match status" value="1"/>
</dbReference>
<dbReference type="Gene3D" id="3.90.1100.10">
    <property type="match status" value="2"/>
</dbReference>
<dbReference type="Gene3D" id="2.30.150.10">
    <property type="entry name" value="DNA-directed RNA polymerase, beta subunit, external 1 domain"/>
    <property type="match status" value="1"/>
</dbReference>
<dbReference type="Gene3D" id="2.40.270.10">
    <property type="entry name" value="DNA-directed RNA polymerase, subunit 2, domain 6"/>
    <property type="match status" value="1"/>
</dbReference>
<dbReference type="Gene3D" id="3.90.1800.10">
    <property type="entry name" value="RNA polymerase alpha subunit dimerisation domain"/>
    <property type="match status" value="1"/>
</dbReference>
<dbReference type="Gene3D" id="3.90.1110.10">
    <property type="entry name" value="RNA polymerase Rpb2, domain 2"/>
    <property type="match status" value="1"/>
</dbReference>
<dbReference type="HAMAP" id="MF_01321">
    <property type="entry name" value="RNApol_bact_RpoB"/>
    <property type="match status" value="1"/>
</dbReference>
<dbReference type="InterPro" id="IPR042107">
    <property type="entry name" value="DNA-dir_RNA_pol_bsu_ext_1_sf"/>
</dbReference>
<dbReference type="InterPro" id="IPR019462">
    <property type="entry name" value="DNA-dir_RNA_pol_bsu_external_1"/>
</dbReference>
<dbReference type="InterPro" id="IPR015712">
    <property type="entry name" value="DNA-dir_RNA_pol_su2"/>
</dbReference>
<dbReference type="InterPro" id="IPR007120">
    <property type="entry name" value="DNA-dir_RNAP_su2_dom"/>
</dbReference>
<dbReference type="InterPro" id="IPR037033">
    <property type="entry name" value="DNA-dir_RNAP_su2_hyb_sf"/>
</dbReference>
<dbReference type="InterPro" id="IPR010243">
    <property type="entry name" value="RNA_pol_bsu_bac"/>
</dbReference>
<dbReference type="InterPro" id="IPR007121">
    <property type="entry name" value="RNA_pol_bsu_CS"/>
</dbReference>
<dbReference type="InterPro" id="IPR007644">
    <property type="entry name" value="RNA_pol_bsu_protrusion"/>
</dbReference>
<dbReference type="InterPro" id="IPR007642">
    <property type="entry name" value="RNA_pol_Rpb2_2"/>
</dbReference>
<dbReference type="InterPro" id="IPR037034">
    <property type="entry name" value="RNA_pol_Rpb2_2_sf"/>
</dbReference>
<dbReference type="InterPro" id="IPR007645">
    <property type="entry name" value="RNA_pol_Rpb2_3"/>
</dbReference>
<dbReference type="InterPro" id="IPR007641">
    <property type="entry name" value="RNA_pol_Rpb2_7"/>
</dbReference>
<dbReference type="InterPro" id="IPR014724">
    <property type="entry name" value="RNA_pol_RPB2_OB-fold"/>
</dbReference>
<dbReference type="NCBIfam" id="NF001616">
    <property type="entry name" value="PRK00405.1"/>
    <property type="match status" value="1"/>
</dbReference>
<dbReference type="NCBIfam" id="TIGR02013">
    <property type="entry name" value="rpoB"/>
    <property type="match status" value="1"/>
</dbReference>
<dbReference type="PANTHER" id="PTHR20856">
    <property type="entry name" value="DNA-DIRECTED RNA POLYMERASE I SUBUNIT 2"/>
    <property type="match status" value="1"/>
</dbReference>
<dbReference type="Pfam" id="PF04563">
    <property type="entry name" value="RNA_pol_Rpb2_1"/>
    <property type="match status" value="1"/>
</dbReference>
<dbReference type="Pfam" id="PF04561">
    <property type="entry name" value="RNA_pol_Rpb2_2"/>
    <property type="match status" value="2"/>
</dbReference>
<dbReference type="Pfam" id="PF04565">
    <property type="entry name" value="RNA_pol_Rpb2_3"/>
    <property type="match status" value="1"/>
</dbReference>
<dbReference type="Pfam" id="PF10385">
    <property type="entry name" value="RNA_pol_Rpb2_45"/>
    <property type="match status" value="1"/>
</dbReference>
<dbReference type="Pfam" id="PF00562">
    <property type="entry name" value="RNA_pol_Rpb2_6"/>
    <property type="match status" value="1"/>
</dbReference>
<dbReference type="Pfam" id="PF04560">
    <property type="entry name" value="RNA_pol_Rpb2_7"/>
    <property type="match status" value="1"/>
</dbReference>
<dbReference type="SUPFAM" id="SSF64484">
    <property type="entry name" value="beta and beta-prime subunits of DNA dependent RNA-polymerase"/>
    <property type="match status" value="1"/>
</dbReference>
<dbReference type="PROSITE" id="PS01166">
    <property type="entry name" value="RNA_POL_BETA"/>
    <property type="match status" value="1"/>
</dbReference>
<protein>
    <recommendedName>
        <fullName evidence="1">DNA-directed RNA polymerase subunit beta</fullName>
        <shortName evidence="1">RNAP subunit beta</shortName>
        <ecNumber evidence="1">2.7.7.6</ecNumber>
    </recommendedName>
    <alternativeName>
        <fullName evidence="1">RNA polymerase subunit beta</fullName>
    </alternativeName>
    <alternativeName>
        <fullName evidence="1">Transcriptase subunit beta</fullName>
    </alternativeName>
</protein>
<gene>
    <name evidence="1" type="primary">rpoB</name>
    <name type="ordered locus">YPA_3619</name>
</gene>
<organism>
    <name type="scientific">Yersinia pestis bv. Antiqua (strain Antiqua)</name>
    <dbReference type="NCBI Taxonomy" id="360102"/>
    <lineage>
        <taxon>Bacteria</taxon>
        <taxon>Pseudomonadati</taxon>
        <taxon>Pseudomonadota</taxon>
        <taxon>Gammaproteobacteria</taxon>
        <taxon>Enterobacterales</taxon>
        <taxon>Yersiniaceae</taxon>
        <taxon>Yersinia</taxon>
    </lineage>
</organism>
<name>RPOB_YERPA</name>